<sequence>MATAQSNSPRVFCIGTADTKFDELRFLSEHVRSSLNSFSNKSSFKVGVTVVDVSTSRKETNSCADFDFVPSKDVLSCYARGEGTVGRFPDIRGQAIAIMNKALETFLSKANGEQNLAGVIGLGGSGGTSLLSSAFRSLPIGIPKVIISTVASGQTESYIGTSDLVLFPSVVDICGINNVSKVVLSNAGAAFAGMVIGRLESSKEHSITNGKFTVGVTMFGVTTPCVNAVKERLVKEGYETLVFHATGVGGRAMEDLVRGGFIQGVLDITTTEVADYVVGGVMACDSSRFDAILEKKIPLVLSVGALDMVNFGPKTTIPPEFQQRKIHQHNEQVSLMHTTVGENKKFAAFIAEKLNKASSSVCVCLPEKGVSALDAPGKDFYDPEATSCLTHELQMLLENNERCQVKVYPYHINDVEFANALVDSFLEMSPKSGHVECQTAESKSIQGIQNVNAVLEKYPSCNGKNFSRLNDFPNAKPETLQKRIVILQKLKDQISKGKPIIGAGAGTGISAKFEEAGGVDLIVLYNSGRFRMAGRGSLAGLLPFADANAIVLEMANEVLPVVKEVAVLAGVCATDPFRRMDNFLKQLESVGFCGVQNFPTVGLFDGNFRQNLEETGMGYGLEVEMIATAHRMGLLTTPYAFCPDEAVAMAEAGADIIVAHMGLTTSGSIGAKTAVSLEESVTCVQAIADATHRINPDAIVLCHGGPISSPEEAAYVLKRTTGVHGFYGASSMERLPVEQAITATVQQYKSISME</sequence>
<name>TM1S_SOLLC</name>
<dbReference type="EMBL" id="AB287297">
    <property type="protein sequence ID" value="BAF75725.1"/>
    <property type="molecule type" value="mRNA"/>
</dbReference>
<dbReference type="EMBL" id="CM001065">
    <property type="status" value="NOT_ANNOTATED_CDS"/>
    <property type="molecule type" value="Genomic_DNA"/>
</dbReference>
<dbReference type="RefSeq" id="NP_001234724.1">
    <property type="nucleotide sequence ID" value="NM_001247795.2"/>
</dbReference>
<dbReference type="RefSeq" id="XP_010315841.1">
    <property type="nucleotide sequence ID" value="XM_010317539.2"/>
</dbReference>
<dbReference type="RefSeq" id="XP_019067502.1">
    <property type="nucleotide sequence ID" value="XM_019211957.1"/>
</dbReference>
<dbReference type="SMR" id="A7M6E8"/>
<dbReference type="FunCoup" id="A7M6E8">
    <property type="interactions" value="752"/>
</dbReference>
<dbReference type="STRING" id="4081.A7M6E8"/>
<dbReference type="PaxDb" id="4081-Solyc02g062560.2.1"/>
<dbReference type="EnsemblPlants" id="Solyc02g062560.3.1">
    <property type="protein sequence ID" value="Solyc02g062560.3.1"/>
    <property type="gene ID" value="Solyc02g062560.3"/>
</dbReference>
<dbReference type="GeneID" id="100134884"/>
<dbReference type="Gramene" id="Solyc02g062560.3.1">
    <property type="protein sequence ID" value="Solyc02g062560.3.1"/>
    <property type="gene ID" value="Solyc02g062560.3"/>
</dbReference>
<dbReference type="KEGG" id="sly:100134884"/>
<dbReference type="eggNOG" id="ENOG502QQGA">
    <property type="taxonomic scope" value="Eukaryota"/>
</dbReference>
<dbReference type="HOGENOM" id="CLU_021337_1_0_1"/>
<dbReference type="InParanoid" id="A7M6E8"/>
<dbReference type="OMA" id="KEYCSTQ"/>
<dbReference type="OrthoDB" id="10264588at2759"/>
<dbReference type="PhylomeDB" id="A7M6E8"/>
<dbReference type="Proteomes" id="UP000004994">
    <property type="component" value="Chromosome 2"/>
</dbReference>
<dbReference type="ExpressionAtlas" id="A7M6E8">
    <property type="expression patterns" value="baseline and differential"/>
</dbReference>
<dbReference type="GO" id="GO:0005524">
    <property type="term" value="F:ATP binding"/>
    <property type="evidence" value="ECO:0007669"/>
    <property type="project" value="UniProtKB-KW"/>
</dbReference>
<dbReference type="GO" id="GO:0003824">
    <property type="term" value="F:catalytic activity"/>
    <property type="evidence" value="ECO:0007669"/>
    <property type="project" value="InterPro"/>
</dbReference>
<dbReference type="GO" id="GO:0051607">
    <property type="term" value="P:defense response to virus"/>
    <property type="evidence" value="ECO:0000314"/>
    <property type="project" value="UniProtKB"/>
</dbReference>
<dbReference type="GO" id="GO:0044830">
    <property type="term" value="P:modulation by host of viral RNA genome replication"/>
    <property type="evidence" value="ECO:0000314"/>
    <property type="project" value="UniProtKB"/>
</dbReference>
<dbReference type="CDD" id="cd15488">
    <property type="entry name" value="Tm-1-like"/>
    <property type="match status" value="1"/>
</dbReference>
<dbReference type="Gene3D" id="3.20.20.70">
    <property type="entry name" value="Aldolase class I"/>
    <property type="match status" value="1"/>
</dbReference>
<dbReference type="Gene3D" id="3.40.50.12030">
    <property type="entry name" value="Uncharacterised protein family UPF0261, NC domain"/>
    <property type="match status" value="1"/>
</dbReference>
<dbReference type="Gene3D" id="3.40.50.12020">
    <property type="entry name" value="Uncharacterised protein family UPF0261, NN domain"/>
    <property type="match status" value="1"/>
</dbReference>
<dbReference type="InterPro" id="IPR013785">
    <property type="entry name" value="Aldolase_TIM"/>
</dbReference>
<dbReference type="InterPro" id="IPR015813">
    <property type="entry name" value="Pyrv/PenolPyrv_kinase-like_dom"/>
</dbReference>
<dbReference type="InterPro" id="IPR009215">
    <property type="entry name" value="TIM-br_IGPS-like"/>
</dbReference>
<dbReference type="InterPro" id="IPR051353">
    <property type="entry name" value="Tobamovirus_resist_UPF0261"/>
</dbReference>
<dbReference type="InterPro" id="IPR056778">
    <property type="entry name" value="UPF0261_C"/>
</dbReference>
<dbReference type="InterPro" id="IPR044122">
    <property type="entry name" value="UPF0261_N"/>
</dbReference>
<dbReference type="NCBIfam" id="NF002674">
    <property type="entry name" value="PRK02399.1-2"/>
    <property type="match status" value="1"/>
</dbReference>
<dbReference type="PANTHER" id="PTHR31862">
    <property type="entry name" value="UPF0261 DOMAIN PROTEIN (AFU_ORTHOLOGUE AFUA_1G10120)"/>
    <property type="match status" value="1"/>
</dbReference>
<dbReference type="PANTHER" id="PTHR31862:SF1">
    <property type="entry name" value="UPF0261 DOMAIN PROTEIN (AFU_ORTHOLOGUE AFUA_1G10120)"/>
    <property type="match status" value="1"/>
</dbReference>
<dbReference type="Pfam" id="PF09370">
    <property type="entry name" value="PEP_hydrolase"/>
    <property type="match status" value="1"/>
</dbReference>
<dbReference type="Pfam" id="PF06792">
    <property type="entry name" value="UPF0261"/>
    <property type="match status" value="1"/>
</dbReference>
<dbReference type="Pfam" id="PF23189">
    <property type="entry name" value="UPF0261_C"/>
    <property type="match status" value="1"/>
</dbReference>
<dbReference type="SUPFAM" id="SSF51621">
    <property type="entry name" value="Phosphoenolpyruvate/pyruvate domain"/>
    <property type="match status" value="1"/>
</dbReference>
<gene>
    <name evidence="7" type="primary">tm-1</name>
    <name evidence="8" type="ordered locus">Solyc02g062560</name>
</gene>
<reference key="1">
    <citation type="journal article" date="2007" name="Proc. Natl. Acad. Sci. U.S.A.">
        <title>An inhibitor of viral RNA replication is encoded by a plant resistance gene.</title>
        <authorList>
            <person name="Ishibashi K."/>
            <person name="Masuda K."/>
            <person name="Naito S."/>
            <person name="Meshi T."/>
            <person name="Ishikawa M."/>
        </authorList>
    </citation>
    <scope>NUCLEOTIDE SEQUENCE [MRNA]</scope>
    <scope>FUNCTION</scope>
    <source>
        <strain>cv. Craigella GCR26</strain>
    </source>
</reference>
<reference key="2">
    <citation type="journal article" date="2012" name="Nature">
        <title>The tomato genome sequence provides insights into fleshy fruit evolution.</title>
        <authorList>
            <consortium name="Tomato Genome Consortium"/>
        </authorList>
    </citation>
    <scope>NUCLEOTIDE SEQUENCE [LARGE SCALE GENOMIC DNA]</scope>
    <source>
        <strain>cv. Heinz 1706</strain>
    </source>
</reference>
<reference key="3">
    <citation type="journal article" date="1987" name="Virology">
        <title>Characterization of Tm-1 gene action on replication of common isolates and a resistance-breaking isolate of TMV.</title>
        <authorList>
            <person name="Watanabe Y."/>
            <person name="Kishibayashi N."/>
            <person name="Motoyoshi F."/>
            <person name="Okada Y."/>
        </authorList>
    </citation>
    <scope>FUNCTION</scope>
</reference>
<reference key="4">
    <citation type="journal article" date="1998" name="Theor. Appl. Genet.">
        <title>Characterization of disease resistance gene-like sequences in near-isogenic lines of tomato.</title>
        <authorList>
            <person name="Ohmori T."/>
            <person name="Murata M."/>
            <person name="Motoyoshi F."/>
        </authorList>
    </citation>
    <scope>GENE FAMILY</scope>
</reference>
<reference key="5">
    <citation type="journal article" date="2007" name="Arch. Virol.">
        <title>The double-resistance-breaking Tomato mosaic virus strain ToMV1-2 contains two independent single resistance-breaking domains.</title>
        <authorList>
            <person name="Strasser M."/>
            <person name="Pfitzner A.J.P."/>
        </authorList>
    </citation>
    <scope>FUNCTION</scope>
    <source>
        <strain>cv. Craigella GCR26</strain>
    </source>
</reference>
<reference key="6">
    <citation type="journal article" date="2009" name="Proc. Natl. Acad. Sci. U.S.A.">
        <title>An inhibitory interaction between viral and cellular proteins underlies the resistance of tomato to nonadapted tobamoviruses.</title>
        <authorList>
            <person name="Ishibashi K."/>
            <person name="Naito S."/>
            <person name="Meshi T."/>
            <person name="Ishikawa M."/>
        </authorList>
    </citation>
    <scope>FUNCTION</scope>
    <scope>MISCELLANEOUS</scope>
    <scope>SUBUNIT</scope>
    <scope>INTERACTION WITH TOBAMOVIRUSES REPLICATION PROTEINS (MICROBIAL INFECTION)</scope>
</reference>
<reference key="7">
    <citation type="journal article" date="2014" name="Mol. Plant Pathol.">
        <title>Functional characterization of the mutations in Pepper mild mottle virus overcoming tomato tm-1-mediated resistance.</title>
        <authorList>
            <person name="Mizumoto H."/>
            <person name="Morikawa Y."/>
            <person name="Ishibashi K."/>
            <person name="Kimura K."/>
            <person name="Matsumoto K."/>
            <person name="Tokunaga M."/>
            <person name="Kiba A."/>
            <person name="Ishikawa M."/>
            <person name="Okuno T."/>
            <person name="Hikichi Y."/>
        </authorList>
    </citation>
    <scope>FUNCTION</scope>
</reference>
<keyword id="KW-0067">ATP-binding</keyword>
<keyword id="KW-0945">Host-virus interaction</keyword>
<keyword id="KW-0547">Nucleotide-binding</keyword>
<keyword id="KW-0611">Plant defense</keyword>
<keyword id="KW-1185">Reference proteome</keyword>
<comment type="function">
    <text evidence="2 3 4 5 6">Inhibitor of viral RNA replication which confers resistance to some tobamoviruses including tobacco mild green mosaic virus (TMGMV) and pepper mild mottle virus (PMMoV), but not to tomato mosaic virus (ToMV strains L, ToMV0 and ToMV1-2) and tobacco mosaic virus (TMV) (PubMed:17238011, PubMed:17699618, PubMed:19423673, PubMed:24299004, PubMed:3686829). Prevents tobamoviruses RNA replication by affecting the association of tobamoviruses replication proteins (large and small subunits) with host membrane-associated proteins (e.g. TOM1, TOM2A and ARL8), thus inhibiting the replication complex formation on the membranes and avoiding viral negative-strand RNA synthesis (PubMed:19423673).</text>
</comment>
<comment type="subunit">
    <text evidence="1">Homodimer.</text>
</comment>
<comment type="subunit">
    <text evidence="4">(Microbial infection) Binds, via an ATP bridge, to the tobamoviruses avirulent (Avr) replication proteins (large and small subunits, e.g. tobacco mild green mosaic virus (TMGMV) AC P18339 and pepper mild mottle virus (PMMoV) AC P89657) to inhibit their function after the translation of tobamoviruses RNA, but before the viral replication complex formation on the membrane surfaces; this interaction is not possible with resistance-breaking strains replication proteins.</text>
</comment>
<comment type="miscellaneous">
    <text evidence="3">The Tm-1 allele present in the tomato mosaic virus (ToMV)-resistant tomato cv. Craigella isolate GCR237 (AC A7M6E7) confers resistance to ToMV but not the allele present in the ToMV-susceptible tomato cv. Craigella isolate GCR26 (AC A7M6E8).</text>
</comment>
<comment type="miscellaneous">
    <text evidence="4">Transgenic tobacco plants expressing tm-1 exhibit resistance to tobacco mild green mosaic virus (TMGMV) and pepper mild mottle virus (PMMoV), tobamoviruses that cannot multiply in tomato.</text>
</comment>
<comment type="similarity">
    <text evidence="8">Belongs to the UPF0261 family.</text>
</comment>
<protein>
    <recommendedName>
        <fullName evidence="7">ToMV susceptible protein tm-1(GCR26)</fullName>
    </recommendedName>
    <alternativeName>
        <fullName evidence="8">Disease susceptible protein tm-1</fullName>
    </alternativeName>
    <alternativeName>
        <fullName evidence="7">Protein p80(GCR26)</fullName>
    </alternativeName>
</protein>
<accession>A7M6E8</accession>
<organism>
    <name type="scientific">Solanum lycopersicum</name>
    <name type="common">Tomato</name>
    <name type="synonym">Lycopersicon esculentum</name>
    <dbReference type="NCBI Taxonomy" id="4081"/>
    <lineage>
        <taxon>Eukaryota</taxon>
        <taxon>Viridiplantae</taxon>
        <taxon>Streptophyta</taxon>
        <taxon>Embryophyta</taxon>
        <taxon>Tracheophyta</taxon>
        <taxon>Spermatophyta</taxon>
        <taxon>Magnoliopsida</taxon>
        <taxon>eudicotyledons</taxon>
        <taxon>Gunneridae</taxon>
        <taxon>Pentapetalae</taxon>
        <taxon>asterids</taxon>
        <taxon>lamiids</taxon>
        <taxon>Solanales</taxon>
        <taxon>Solanaceae</taxon>
        <taxon>Solanoideae</taxon>
        <taxon>Solaneae</taxon>
        <taxon>Solanum</taxon>
        <taxon>Solanum subgen. Lycopersicon</taxon>
    </lineage>
</organism>
<feature type="chain" id="PRO_0000448713" description="ToMV susceptible protein tm-1(GCR26)">
    <location>
        <begin position="1"/>
        <end position="754"/>
    </location>
</feature>
<feature type="region of interest" description="N-terminal inhibitory domain NN" evidence="1">
    <location>
        <begin position="1"/>
        <end position="201"/>
    </location>
</feature>
<feature type="region of interest" description="N-terminal inhibitory domain NC" evidence="1">
    <location>
        <begin position="211"/>
        <end position="431"/>
    </location>
</feature>
<feature type="binding site" evidence="1">
    <location>
        <begin position="18"/>
        <end position="20"/>
    </location>
    <ligand>
        <name>ATP</name>
        <dbReference type="ChEBI" id="CHEBI:30616"/>
    </ligand>
</feature>
<feature type="binding site" evidence="1">
    <location>
        <position position="55"/>
    </location>
    <ligand>
        <name>ATP</name>
        <dbReference type="ChEBI" id="CHEBI:30616"/>
    </ligand>
</feature>
<feature type="binding site" evidence="1">
    <location>
        <position position="92"/>
    </location>
    <ligand>
        <name>ATP</name>
        <dbReference type="ChEBI" id="CHEBI:30616"/>
    </ligand>
</feature>
<feature type="binding site" evidence="1">
    <location>
        <begin position="124"/>
        <end position="127"/>
    </location>
    <ligand>
        <name>ATP</name>
        <dbReference type="ChEBI" id="CHEBI:30616"/>
    </ligand>
</feature>
<evidence type="ECO:0000250" key="1">
    <source>
        <dbReference type="UniProtKB" id="A7M6E7"/>
    </source>
</evidence>
<evidence type="ECO:0000269" key="2">
    <source>
    </source>
</evidence>
<evidence type="ECO:0000269" key="3">
    <source>
    </source>
</evidence>
<evidence type="ECO:0000269" key="4">
    <source>
    </source>
</evidence>
<evidence type="ECO:0000269" key="5">
    <source>
    </source>
</evidence>
<evidence type="ECO:0000269" key="6">
    <source>
    </source>
</evidence>
<evidence type="ECO:0000303" key="7">
    <source>
    </source>
</evidence>
<evidence type="ECO:0000305" key="8"/>
<proteinExistence type="evidence at protein level"/>